<accession>Q63PC7</accession>
<protein>
    <recommendedName>
        <fullName evidence="1">Acetoacetate decarboxylase</fullName>
        <shortName evidence="1">AAD</shortName>
        <shortName evidence="1">ADC</shortName>
        <ecNumber evidence="1">4.1.1.4</ecNumber>
    </recommendedName>
</protein>
<gene>
    <name evidence="1" type="primary">adc</name>
    <name type="ordered locus">BPSS0018</name>
</gene>
<keyword id="KW-0210">Decarboxylase</keyword>
<keyword id="KW-0456">Lyase</keyword>
<keyword id="KW-1185">Reference proteome</keyword>
<keyword id="KW-0704">Schiff base</keyword>
<name>ADC_BURPS</name>
<dbReference type="EC" id="4.1.1.4" evidence="1"/>
<dbReference type="EMBL" id="BX571966">
    <property type="protein sequence ID" value="CAH37461.1"/>
    <property type="molecule type" value="Genomic_DNA"/>
</dbReference>
<dbReference type="RefSeq" id="WP_004194452.1">
    <property type="nucleotide sequence ID" value="NZ_CP009537.1"/>
</dbReference>
<dbReference type="RefSeq" id="YP_110042.1">
    <property type="nucleotide sequence ID" value="NC_006351.1"/>
</dbReference>
<dbReference type="SMR" id="Q63PC7"/>
<dbReference type="STRING" id="272560.BPSS0018"/>
<dbReference type="KEGG" id="bps:BPSS0018"/>
<dbReference type="PATRIC" id="fig|272560.51.peg.6014"/>
<dbReference type="eggNOG" id="COG4689">
    <property type="taxonomic scope" value="Bacteria"/>
</dbReference>
<dbReference type="Proteomes" id="UP000000605">
    <property type="component" value="Chromosome 2"/>
</dbReference>
<dbReference type="GO" id="GO:0047602">
    <property type="term" value="F:acetoacetate decarboxylase activity"/>
    <property type="evidence" value="ECO:0007669"/>
    <property type="project" value="UniProtKB-UniRule"/>
</dbReference>
<dbReference type="Gene3D" id="2.40.400.10">
    <property type="entry name" value="Acetoacetate decarboxylase-like"/>
    <property type="match status" value="1"/>
</dbReference>
<dbReference type="HAMAP" id="MF_00597">
    <property type="entry name" value="ADC"/>
    <property type="match status" value="1"/>
</dbReference>
<dbReference type="InterPro" id="IPR010451">
    <property type="entry name" value="Acetoacetate_decarboxylase"/>
</dbReference>
<dbReference type="InterPro" id="IPR023653">
    <property type="entry name" value="Acetoacetate_decarboxylase_bac"/>
</dbReference>
<dbReference type="InterPro" id="IPR023375">
    <property type="entry name" value="ADC_dom_sf"/>
</dbReference>
<dbReference type="NCBIfam" id="NF002614">
    <property type="entry name" value="PRK02265.1"/>
    <property type="match status" value="1"/>
</dbReference>
<dbReference type="Pfam" id="PF06314">
    <property type="entry name" value="ADC"/>
    <property type="match status" value="1"/>
</dbReference>
<dbReference type="SUPFAM" id="SSF160104">
    <property type="entry name" value="Acetoacetate decarboxylase-like"/>
    <property type="match status" value="1"/>
</dbReference>
<feature type="chain" id="PRO_1000025638" description="Acetoacetate decarboxylase">
    <location>
        <begin position="1"/>
        <end position="246"/>
    </location>
</feature>
<feature type="active site" description="Schiff-base intermediate with acetoacetate" evidence="1">
    <location>
        <position position="116"/>
    </location>
</feature>
<comment type="function">
    <text evidence="1">Catalyzes the conversion of acetoacetate to acetone and carbon dioxide.</text>
</comment>
<comment type="catalytic activity">
    <reaction evidence="1">
        <text>acetoacetate + H(+) = acetone + CO2</text>
        <dbReference type="Rhea" id="RHEA:19729"/>
        <dbReference type="ChEBI" id="CHEBI:13705"/>
        <dbReference type="ChEBI" id="CHEBI:15347"/>
        <dbReference type="ChEBI" id="CHEBI:15378"/>
        <dbReference type="ChEBI" id="CHEBI:16526"/>
        <dbReference type="EC" id="4.1.1.4"/>
    </reaction>
</comment>
<comment type="similarity">
    <text evidence="1">Belongs to the ADC family.</text>
</comment>
<reference key="1">
    <citation type="journal article" date="2004" name="Proc. Natl. Acad. Sci. U.S.A.">
        <title>Genomic plasticity of the causative agent of melioidosis, Burkholderia pseudomallei.</title>
        <authorList>
            <person name="Holden M.T.G."/>
            <person name="Titball R.W."/>
            <person name="Peacock S.J."/>
            <person name="Cerdeno-Tarraga A.-M."/>
            <person name="Atkins T."/>
            <person name="Crossman L.C."/>
            <person name="Pitt T."/>
            <person name="Churcher C."/>
            <person name="Mungall K.L."/>
            <person name="Bentley S.D."/>
            <person name="Sebaihia M."/>
            <person name="Thomson N.R."/>
            <person name="Bason N."/>
            <person name="Beacham I.R."/>
            <person name="Brooks K."/>
            <person name="Brown K.A."/>
            <person name="Brown N.F."/>
            <person name="Challis G.L."/>
            <person name="Cherevach I."/>
            <person name="Chillingworth T."/>
            <person name="Cronin A."/>
            <person name="Crossett B."/>
            <person name="Davis P."/>
            <person name="DeShazer D."/>
            <person name="Feltwell T."/>
            <person name="Fraser A."/>
            <person name="Hance Z."/>
            <person name="Hauser H."/>
            <person name="Holroyd S."/>
            <person name="Jagels K."/>
            <person name="Keith K.E."/>
            <person name="Maddison M."/>
            <person name="Moule S."/>
            <person name="Price C."/>
            <person name="Quail M.A."/>
            <person name="Rabbinowitsch E."/>
            <person name="Rutherford K."/>
            <person name="Sanders M."/>
            <person name="Simmonds M."/>
            <person name="Songsivilai S."/>
            <person name="Stevens K."/>
            <person name="Tumapa S."/>
            <person name="Vesaratchavest M."/>
            <person name="Whitehead S."/>
            <person name="Yeats C."/>
            <person name="Barrell B.G."/>
            <person name="Oyston P.C.F."/>
            <person name="Parkhill J."/>
        </authorList>
    </citation>
    <scope>NUCLEOTIDE SEQUENCE [LARGE SCALE GENOMIC DNA]</scope>
    <source>
        <strain>K96243</strain>
    </source>
</reference>
<sequence length="246" mass="27494">MKPSQVRSKAFAMPLTSPAFPMGPYRFVNREFLIITYRTDMDRLREIVPEPLEVKEPLVHYEFIRMPDSTGFGDYTESGQVIPVEYKGQPGGYTLAMYLNDHPPIAGGRELWGFPKKLAQPTLQTHIDTLLGTLDYGPVRVATGTMGYKHQELDLEEQAKRLAGANFLLKIIPHVDGSARVCELVRYYLQDIEMKGAWTGPASLQLAPHALAPVADLPVLEIVEARHLLADLTLGLGEVVYDYLAQ</sequence>
<proteinExistence type="inferred from homology"/>
<organism>
    <name type="scientific">Burkholderia pseudomallei (strain K96243)</name>
    <dbReference type="NCBI Taxonomy" id="272560"/>
    <lineage>
        <taxon>Bacteria</taxon>
        <taxon>Pseudomonadati</taxon>
        <taxon>Pseudomonadota</taxon>
        <taxon>Betaproteobacteria</taxon>
        <taxon>Burkholderiales</taxon>
        <taxon>Burkholderiaceae</taxon>
        <taxon>Burkholderia</taxon>
        <taxon>pseudomallei group</taxon>
    </lineage>
</organism>
<evidence type="ECO:0000255" key="1">
    <source>
        <dbReference type="HAMAP-Rule" id="MF_00597"/>
    </source>
</evidence>